<protein>
    <recommendedName>
        <fullName evidence="7">Oligosaccharides import ATP-binding protein MsmX</fullName>
        <ecNumber evidence="8 9 10 11 12">7.5.2.-</ecNumber>
    </recommendedName>
    <alternativeName>
        <fullName evidence="7">Maltodextrin import ATP-binding protein MsmX</fullName>
    </alternativeName>
    <alternativeName>
        <fullName evidence="7">Melibiose/raffinose/stachyose import ATP-binding protein MsmX</fullName>
    </alternativeName>
</protein>
<dbReference type="EC" id="7.5.2.-" evidence="8 9 10 11 12"/>
<dbReference type="EMBL" id="D83026">
    <property type="protein sequence ID" value="BAA11723.1"/>
    <property type="molecule type" value="Genomic_DNA"/>
</dbReference>
<dbReference type="EMBL" id="AL009126">
    <property type="protein sequence ID" value="CAB15907.1"/>
    <property type="molecule type" value="Genomic_DNA"/>
</dbReference>
<dbReference type="PIR" id="B69661">
    <property type="entry name" value="B69661"/>
</dbReference>
<dbReference type="RefSeq" id="NP_391760.1">
    <property type="nucleotide sequence ID" value="NC_000964.3"/>
</dbReference>
<dbReference type="RefSeq" id="WP_003242648.1">
    <property type="nucleotide sequence ID" value="NZ_OZ025638.1"/>
</dbReference>
<dbReference type="PDB" id="6YIR">
    <property type="method" value="X-ray"/>
    <property type="resolution" value="1.68 A"/>
    <property type="chains" value="A=1-365"/>
</dbReference>
<dbReference type="PDBsum" id="6YIR"/>
<dbReference type="SMR" id="P94360"/>
<dbReference type="FunCoup" id="P94360">
    <property type="interactions" value="731"/>
</dbReference>
<dbReference type="STRING" id="224308.BSU38810"/>
<dbReference type="TCDB" id="3.A.1.1.26">
    <property type="family name" value="the atp-binding cassette (abc) superfamily"/>
</dbReference>
<dbReference type="TCDB" id="3.A.1.1.34">
    <property type="family name" value="the atp-binding cassette (abc) superfamily"/>
</dbReference>
<dbReference type="jPOST" id="P94360"/>
<dbReference type="PaxDb" id="224308-BSU38810"/>
<dbReference type="EnsemblBacteria" id="CAB15907">
    <property type="protein sequence ID" value="CAB15907"/>
    <property type="gene ID" value="BSU_38810"/>
</dbReference>
<dbReference type="GeneID" id="86871485"/>
<dbReference type="GeneID" id="937422"/>
<dbReference type="KEGG" id="bsu:BSU38810"/>
<dbReference type="PATRIC" id="fig|224308.179.peg.4200"/>
<dbReference type="eggNOG" id="COG3842">
    <property type="taxonomic scope" value="Bacteria"/>
</dbReference>
<dbReference type="InParanoid" id="P94360"/>
<dbReference type="OrthoDB" id="9802264at2"/>
<dbReference type="PhylomeDB" id="P94360"/>
<dbReference type="BioCyc" id="BSUB:BSU38810-MONOMER"/>
<dbReference type="SABIO-RK" id="P94360"/>
<dbReference type="Proteomes" id="UP000001570">
    <property type="component" value="Chromosome"/>
</dbReference>
<dbReference type="GO" id="GO:0055052">
    <property type="term" value="C:ATP-binding cassette (ABC) transporter complex, substrate-binding subunit-containing"/>
    <property type="evidence" value="ECO:0000318"/>
    <property type="project" value="GO_Central"/>
</dbReference>
<dbReference type="GO" id="GO:0140359">
    <property type="term" value="F:ABC-type transporter activity"/>
    <property type="evidence" value="ECO:0007669"/>
    <property type="project" value="InterPro"/>
</dbReference>
<dbReference type="GO" id="GO:0005524">
    <property type="term" value="F:ATP binding"/>
    <property type="evidence" value="ECO:0007669"/>
    <property type="project" value="UniProtKB-KW"/>
</dbReference>
<dbReference type="GO" id="GO:0016887">
    <property type="term" value="F:ATP hydrolysis activity"/>
    <property type="evidence" value="ECO:0007669"/>
    <property type="project" value="InterPro"/>
</dbReference>
<dbReference type="GO" id="GO:0015774">
    <property type="term" value="P:polysaccharide transport"/>
    <property type="evidence" value="ECO:0007669"/>
    <property type="project" value="UniProtKB-KW"/>
</dbReference>
<dbReference type="CDD" id="cd03301">
    <property type="entry name" value="ABC_MalK_N"/>
    <property type="match status" value="1"/>
</dbReference>
<dbReference type="FunFam" id="3.40.50.300:FF:000042">
    <property type="entry name" value="Maltose/maltodextrin ABC transporter, ATP-binding protein"/>
    <property type="match status" value="1"/>
</dbReference>
<dbReference type="FunFam" id="2.40.50.100:FF:000028">
    <property type="entry name" value="Sugar ABC transporter, ATP-binding protein"/>
    <property type="match status" value="1"/>
</dbReference>
<dbReference type="Gene3D" id="2.40.50.100">
    <property type="match status" value="1"/>
</dbReference>
<dbReference type="Gene3D" id="2.40.50.140">
    <property type="entry name" value="Nucleic acid-binding proteins"/>
    <property type="match status" value="1"/>
</dbReference>
<dbReference type="Gene3D" id="3.40.50.300">
    <property type="entry name" value="P-loop containing nucleotide triphosphate hydrolases"/>
    <property type="match status" value="1"/>
</dbReference>
<dbReference type="InterPro" id="IPR003593">
    <property type="entry name" value="AAA+_ATPase"/>
</dbReference>
<dbReference type="InterPro" id="IPR003439">
    <property type="entry name" value="ABC_transporter-like_ATP-bd"/>
</dbReference>
<dbReference type="InterPro" id="IPR017871">
    <property type="entry name" value="ABC_transporter-like_CS"/>
</dbReference>
<dbReference type="InterPro" id="IPR015855">
    <property type="entry name" value="ABC_transpr_MalK-like"/>
</dbReference>
<dbReference type="InterPro" id="IPR047641">
    <property type="entry name" value="ABC_transpr_MalK/UgpC-like"/>
</dbReference>
<dbReference type="InterPro" id="IPR008995">
    <property type="entry name" value="Mo/tungstate-bd_C_term_dom"/>
</dbReference>
<dbReference type="InterPro" id="IPR012340">
    <property type="entry name" value="NA-bd_OB-fold"/>
</dbReference>
<dbReference type="InterPro" id="IPR040582">
    <property type="entry name" value="OB_MalK-like"/>
</dbReference>
<dbReference type="InterPro" id="IPR027417">
    <property type="entry name" value="P-loop_NTPase"/>
</dbReference>
<dbReference type="InterPro" id="IPR005116">
    <property type="entry name" value="Transp-assoc_OB_typ1"/>
</dbReference>
<dbReference type="NCBIfam" id="NF008653">
    <property type="entry name" value="PRK11650.1"/>
    <property type="match status" value="1"/>
</dbReference>
<dbReference type="PANTHER" id="PTHR43875">
    <property type="entry name" value="MALTODEXTRIN IMPORT ATP-BINDING PROTEIN MSMX"/>
    <property type="match status" value="1"/>
</dbReference>
<dbReference type="PANTHER" id="PTHR43875:SF1">
    <property type="entry name" value="OSMOPROTECTIVE COMPOUNDS UPTAKE ATP-BINDING PROTEIN GGTA"/>
    <property type="match status" value="1"/>
</dbReference>
<dbReference type="Pfam" id="PF00005">
    <property type="entry name" value="ABC_tran"/>
    <property type="match status" value="1"/>
</dbReference>
<dbReference type="Pfam" id="PF17912">
    <property type="entry name" value="OB_MalK"/>
    <property type="match status" value="1"/>
</dbReference>
<dbReference type="Pfam" id="PF03459">
    <property type="entry name" value="TOBE"/>
    <property type="match status" value="1"/>
</dbReference>
<dbReference type="SMART" id="SM00382">
    <property type="entry name" value="AAA"/>
    <property type="match status" value="1"/>
</dbReference>
<dbReference type="SUPFAM" id="SSF50331">
    <property type="entry name" value="MOP-like"/>
    <property type="match status" value="1"/>
</dbReference>
<dbReference type="SUPFAM" id="SSF52540">
    <property type="entry name" value="P-loop containing nucleoside triphosphate hydrolases"/>
    <property type="match status" value="1"/>
</dbReference>
<dbReference type="PROSITE" id="PS00211">
    <property type="entry name" value="ABC_TRANSPORTER_1"/>
    <property type="match status" value="1"/>
</dbReference>
<dbReference type="PROSITE" id="PS50893">
    <property type="entry name" value="ABC_TRANSPORTER_2"/>
    <property type="match status" value="1"/>
</dbReference>
<name>MSMX_BACSU</name>
<reference key="1">
    <citation type="journal article" date="1996" name="Microbiology">
        <title>Sequencing of a 65 kb region of the Bacillus subtilis genome containing the lic and cel loci, and creation of a 177 kb contig covering the gnt-sacXY region.</title>
        <authorList>
            <person name="Yoshida K."/>
            <person name="Shindo K."/>
            <person name="Sano H."/>
            <person name="Seki S."/>
            <person name="Fujimura M."/>
            <person name="Yanai N."/>
            <person name="Miwa Y."/>
            <person name="Fujita Y."/>
        </authorList>
    </citation>
    <scope>NUCLEOTIDE SEQUENCE [GENOMIC DNA]</scope>
    <source>
        <strain>168 / BGSC1A1</strain>
    </source>
</reference>
<reference key="2">
    <citation type="journal article" date="1997" name="Nature">
        <title>The complete genome sequence of the Gram-positive bacterium Bacillus subtilis.</title>
        <authorList>
            <person name="Kunst F."/>
            <person name="Ogasawara N."/>
            <person name="Moszer I."/>
            <person name="Albertini A.M."/>
            <person name="Alloni G."/>
            <person name="Azevedo V."/>
            <person name="Bertero M.G."/>
            <person name="Bessieres P."/>
            <person name="Bolotin A."/>
            <person name="Borchert S."/>
            <person name="Borriss R."/>
            <person name="Boursier L."/>
            <person name="Brans A."/>
            <person name="Braun M."/>
            <person name="Brignell S.C."/>
            <person name="Bron S."/>
            <person name="Brouillet S."/>
            <person name="Bruschi C.V."/>
            <person name="Caldwell B."/>
            <person name="Capuano V."/>
            <person name="Carter N.M."/>
            <person name="Choi S.-K."/>
            <person name="Codani J.-J."/>
            <person name="Connerton I.F."/>
            <person name="Cummings N.J."/>
            <person name="Daniel R.A."/>
            <person name="Denizot F."/>
            <person name="Devine K.M."/>
            <person name="Duesterhoeft A."/>
            <person name="Ehrlich S.D."/>
            <person name="Emmerson P.T."/>
            <person name="Entian K.-D."/>
            <person name="Errington J."/>
            <person name="Fabret C."/>
            <person name="Ferrari E."/>
            <person name="Foulger D."/>
            <person name="Fritz C."/>
            <person name="Fujita M."/>
            <person name="Fujita Y."/>
            <person name="Fuma S."/>
            <person name="Galizzi A."/>
            <person name="Galleron N."/>
            <person name="Ghim S.-Y."/>
            <person name="Glaser P."/>
            <person name="Goffeau A."/>
            <person name="Golightly E.J."/>
            <person name="Grandi G."/>
            <person name="Guiseppi G."/>
            <person name="Guy B.J."/>
            <person name="Haga K."/>
            <person name="Haiech J."/>
            <person name="Harwood C.R."/>
            <person name="Henaut A."/>
            <person name="Hilbert H."/>
            <person name="Holsappel S."/>
            <person name="Hosono S."/>
            <person name="Hullo M.-F."/>
            <person name="Itaya M."/>
            <person name="Jones L.-M."/>
            <person name="Joris B."/>
            <person name="Karamata D."/>
            <person name="Kasahara Y."/>
            <person name="Klaerr-Blanchard M."/>
            <person name="Klein C."/>
            <person name="Kobayashi Y."/>
            <person name="Koetter P."/>
            <person name="Koningstein G."/>
            <person name="Krogh S."/>
            <person name="Kumano M."/>
            <person name="Kurita K."/>
            <person name="Lapidus A."/>
            <person name="Lardinois S."/>
            <person name="Lauber J."/>
            <person name="Lazarevic V."/>
            <person name="Lee S.-M."/>
            <person name="Levine A."/>
            <person name="Liu H."/>
            <person name="Masuda S."/>
            <person name="Mauel C."/>
            <person name="Medigue C."/>
            <person name="Medina N."/>
            <person name="Mellado R.P."/>
            <person name="Mizuno M."/>
            <person name="Moestl D."/>
            <person name="Nakai S."/>
            <person name="Noback M."/>
            <person name="Noone D."/>
            <person name="O'Reilly M."/>
            <person name="Ogawa K."/>
            <person name="Ogiwara A."/>
            <person name="Oudega B."/>
            <person name="Park S.-H."/>
            <person name="Parro V."/>
            <person name="Pohl T.M."/>
            <person name="Portetelle D."/>
            <person name="Porwollik S."/>
            <person name="Prescott A.M."/>
            <person name="Presecan E."/>
            <person name="Pujic P."/>
            <person name="Purnelle B."/>
            <person name="Rapoport G."/>
            <person name="Rey M."/>
            <person name="Reynolds S."/>
            <person name="Rieger M."/>
            <person name="Rivolta C."/>
            <person name="Rocha E."/>
            <person name="Roche B."/>
            <person name="Rose M."/>
            <person name="Sadaie Y."/>
            <person name="Sato T."/>
            <person name="Scanlan E."/>
            <person name="Schleich S."/>
            <person name="Schroeter R."/>
            <person name="Scoffone F."/>
            <person name="Sekiguchi J."/>
            <person name="Sekowska A."/>
            <person name="Seror S.J."/>
            <person name="Serror P."/>
            <person name="Shin B.-S."/>
            <person name="Soldo B."/>
            <person name="Sorokin A."/>
            <person name="Tacconi E."/>
            <person name="Takagi T."/>
            <person name="Takahashi H."/>
            <person name="Takemaru K."/>
            <person name="Takeuchi M."/>
            <person name="Tamakoshi A."/>
            <person name="Tanaka T."/>
            <person name="Terpstra P."/>
            <person name="Tognoni A."/>
            <person name="Tosato V."/>
            <person name="Uchiyama S."/>
            <person name="Vandenbol M."/>
            <person name="Vannier F."/>
            <person name="Vassarotti A."/>
            <person name="Viari A."/>
            <person name="Wambutt R."/>
            <person name="Wedler E."/>
            <person name="Wedler H."/>
            <person name="Weitzenegger T."/>
            <person name="Winters P."/>
            <person name="Wipat A."/>
            <person name="Yamamoto H."/>
            <person name="Yamane K."/>
            <person name="Yasumoto K."/>
            <person name="Yata K."/>
            <person name="Yoshida K."/>
            <person name="Yoshikawa H.-F."/>
            <person name="Zumstein E."/>
            <person name="Yoshikawa H."/>
            <person name="Danchin A."/>
        </authorList>
    </citation>
    <scope>NUCLEOTIDE SEQUENCE [LARGE SCALE GENOMIC DNA]</scope>
    <source>
        <strain>168</strain>
    </source>
</reference>
<reference key="3">
    <citation type="journal article" date="2006" name="J. Bacteriol.">
        <title>Maltose and maltodextrin utilization by Bacillus subtilis.</title>
        <authorList>
            <person name="Schoenert S."/>
            <person name="Seitz S."/>
            <person name="Krafft H."/>
            <person name="Feuerbaum E.-A."/>
            <person name="Andernach I."/>
            <person name="Witz G."/>
            <person name="Dahl M.K."/>
        </authorList>
    </citation>
    <scope>FUNCTION IN MALTODEXTRIN IMPORT</scope>
    <scope>SUBUNIT</scope>
    <source>
        <strain>168</strain>
    </source>
</reference>
<reference key="4">
    <citation type="journal article" date="2010" name="J. Bacteriol.">
        <title>A multitask ATPase serving different ABC-type sugar importers in Bacillus subtilis.</title>
        <authorList>
            <person name="Ferreira M.J."/>
            <person name="Sa-Nogueira I.D."/>
        </authorList>
    </citation>
    <scope>FUNCTION IN ARABINOOLIGOSACCHARIDES IMPORT</scope>
    <scope>SUBUNIT</scope>
    <scope>DISRUPTION PHENOTYPE</scope>
</reference>
<reference key="5">
    <citation type="journal article" date="2016" name="J. Bacteriol.">
        <title>Role of the ganSPQAB operon in degradation of galactan by Bacillus subtilis.</title>
        <authorList>
            <person name="Watzlawick H."/>
            <person name="Morabbi Heravi K."/>
            <person name="Altenbuchner J."/>
        </authorList>
    </citation>
    <scope>FUNCTION IN GALACTOOLIGOSACCHARIDES IMPORT</scope>
    <scope>SUBUNIT</scope>
</reference>
<reference key="6">
    <citation type="journal article" date="2017" name="PLoS ONE">
        <title>The MsmX ATPase plays a crucial role in pectin mobilization by Bacillus subtilis.</title>
        <authorList>
            <person name="Ferreira M.J."/>
            <person name="Mendes A.L."/>
            <person name="de Sa-Nogueira I."/>
        </authorList>
    </citation>
    <scope>FUNCTION</scope>
    <scope>SUBUNIT</scope>
    <scope>INDUCTION</scope>
    <scope>DISRUPTION PHENOTYPE</scope>
</reference>
<reference key="7">
    <citation type="journal article" date="2019" name="J. Bacteriol.">
        <title>The melREDCA operon encodes a utilization system for the raffinose family of oligosaccharides in Bacillus subtilis.</title>
        <authorList>
            <person name="Morabbi Heravi K."/>
            <person name="Watzlawick H."/>
            <person name="Altenbuchner J."/>
        </authorList>
    </citation>
    <scope>FUNCTION IN MELIBIOSE; RAFFINOSE AND STACHYOSE IMPORT</scope>
    <scope>SUBUNIT</scope>
    <scope>DISRUPTION PHENOTYPE</scope>
    <source>
        <strain>168 / KM0</strain>
    </source>
</reference>
<feature type="chain" id="PRO_0000092613" description="Oligosaccharides import ATP-binding protein MsmX">
    <location>
        <begin position="1"/>
        <end position="365"/>
    </location>
</feature>
<feature type="domain" description="ABC transporter" evidence="1">
    <location>
        <begin position="4"/>
        <end position="235"/>
    </location>
</feature>
<feature type="binding site" evidence="1">
    <location>
        <begin position="37"/>
        <end position="44"/>
    </location>
    <ligand>
        <name>ATP</name>
        <dbReference type="ChEBI" id="CHEBI:30616"/>
    </ligand>
</feature>
<feature type="strand" evidence="13">
    <location>
        <begin position="4"/>
        <end position="11"/>
    </location>
</feature>
<feature type="strand" evidence="13">
    <location>
        <begin position="14"/>
        <end position="17"/>
    </location>
</feature>
<feature type="strand" evidence="13">
    <location>
        <begin position="19"/>
        <end position="27"/>
    </location>
</feature>
<feature type="strand" evidence="13">
    <location>
        <begin position="32"/>
        <end position="36"/>
    </location>
</feature>
<feature type="helix" evidence="13">
    <location>
        <begin position="43"/>
        <end position="50"/>
    </location>
</feature>
<feature type="strand" evidence="13">
    <location>
        <begin position="57"/>
        <end position="63"/>
    </location>
</feature>
<feature type="helix" evidence="13">
    <location>
        <begin position="73"/>
        <end position="75"/>
    </location>
</feature>
<feature type="strand" evidence="13">
    <location>
        <begin position="78"/>
        <end position="80"/>
    </location>
</feature>
<feature type="turn" evidence="13">
    <location>
        <begin position="81"/>
        <end position="84"/>
    </location>
</feature>
<feature type="helix" evidence="13">
    <location>
        <begin position="93"/>
        <end position="103"/>
    </location>
</feature>
<feature type="helix" evidence="13">
    <location>
        <begin position="108"/>
        <end position="121"/>
    </location>
</feature>
<feature type="helix" evidence="13">
    <location>
        <begin position="125"/>
        <end position="127"/>
    </location>
</feature>
<feature type="helix" evidence="13">
    <location>
        <begin position="132"/>
        <end position="134"/>
    </location>
</feature>
<feature type="helix" evidence="13">
    <location>
        <begin position="137"/>
        <end position="140"/>
    </location>
</feature>
<feature type="helix" evidence="13">
    <location>
        <begin position="143"/>
        <end position="150"/>
    </location>
</feature>
<feature type="strand" evidence="13">
    <location>
        <begin position="154"/>
        <end position="160"/>
    </location>
</feature>
<feature type="turn" evidence="13">
    <location>
        <begin position="161"/>
        <end position="164"/>
    </location>
</feature>
<feature type="helix" evidence="13">
    <location>
        <begin position="167"/>
        <end position="184"/>
    </location>
</feature>
<feature type="strand" evidence="13">
    <location>
        <begin position="187"/>
        <end position="193"/>
    </location>
</feature>
<feature type="helix" evidence="13">
    <location>
        <begin position="195"/>
        <end position="201"/>
    </location>
</feature>
<feature type="strand" evidence="13">
    <location>
        <begin position="203"/>
        <end position="209"/>
    </location>
</feature>
<feature type="strand" evidence="13">
    <location>
        <begin position="212"/>
        <end position="217"/>
    </location>
</feature>
<feature type="helix" evidence="13">
    <location>
        <begin position="219"/>
        <end position="224"/>
    </location>
</feature>
<feature type="helix" evidence="13">
    <location>
        <begin position="229"/>
        <end position="234"/>
    </location>
</feature>
<feature type="strand" evidence="13">
    <location>
        <begin position="235"/>
        <end position="238"/>
    </location>
</feature>
<feature type="strand" evidence="13">
    <location>
        <begin position="241"/>
        <end position="247"/>
    </location>
</feature>
<feature type="strand" evidence="13">
    <location>
        <begin position="249"/>
        <end position="254"/>
    </location>
</feature>
<feature type="strand" evidence="13">
    <location>
        <begin position="257"/>
        <end position="260"/>
    </location>
</feature>
<feature type="helix" evidence="13">
    <location>
        <begin position="263"/>
        <end position="271"/>
    </location>
</feature>
<feature type="strand" evidence="13">
    <location>
        <begin position="277"/>
        <end position="283"/>
    </location>
</feature>
<feature type="helix" evidence="13">
    <location>
        <begin position="285"/>
        <end position="287"/>
    </location>
</feature>
<feature type="strand" evidence="13">
    <location>
        <begin position="288"/>
        <end position="290"/>
    </location>
</feature>
<feature type="turn" evidence="13">
    <location>
        <begin position="291"/>
        <end position="293"/>
    </location>
</feature>
<feature type="strand" evidence="13">
    <location>
        <begin position="302"/>
        <end position="306"/>
    </location>
</feature>
<feature type="strand" evidence="13">
    <location>
        <begin position="308"/>
        <end position="313"/>
    </location>
</feature>
<feature type="strand" evidence="13">
    <location>
        <begin position="316"/>
        <end position="323"/>
    </location>
</feature>
<feature type="strand" evidence="13">
    <location>
        <begin position="326"/>
        <end position="333"/>
    </location>
</feature>
<feature type="strand" evidence="13">
    <location>
        <begin position="342"/>
        <end position="348"/>
    </location>
</feature>
<feature type="helix" evidence="13">
    <location>
        <begin position="350"/>
        <end position="352"/>
    </location>
</feature>
<feature type="strand" evidence="13">
    <location>
        <begin position="354"/>
        <end position="357"/>
    </location>
</feature>
<feature type="turn" evidence="13">
    <location>
        <begin position="358"/>
        <end position="360"/>
    </location>
</feature>
<sequence length="365" mass="41366">MAELRMEHIYKFYDQKEPAVDDFNLHIADKEFIVFVGPSGCGKSTTLRMVAGLEEISKGDFYIEGKRVNDVAPKDRDIAMVFQNYALYPHMTVYDNIAFGLKLRKMPKPEIKKRVEEAAKILGLEEYLHRKPKALSGGQRQRVALGRAIVRDAKVFLMDEPLSNLDAKLRVQMRAEIIKLHQRLQTTTIYVTHDQTEALTMATRIVVMKDGKIQQIGTPKDVYEFPENVFVGGFIGSPAMNFFKGKLTDGLIKIGSAALTVPEGKMKVLREKGYIGKEVIFGIRPEDIHDELIVVESYKNSSIKAKINVAELLGSEIMIYSQIDNQDFIARIDARLDIQSGDELTVAFDMNKGHFFDSETEVRIR</sequence>
<keyword id="KW-0002">3D-structure</keyword>
<keyword id="KW-0067">ATP-binding</keyword>
<keyword id="KW-1003">Cell membrane</keyword>
<keyword id="KW-0378">Hydrolase</keyword>
<keyword id="KW-0472">Membrane</keyword>
<keyword id="KW-0547">Nucleotide-binding</keyword>
<keyword id="KW-0625">Polysaccharide transport</keyword>
<keyword id="KW-1185">Reference proteome</keyword>
<keyword id="KW-0762">Sugar transport</keyword>
<keyword id="KW-1278">Translocase</keyword>
<keyword id="KW-0813">Transport</keyword>
<accession>P94360</accession>
<gene>
    <name type="primary">msmX</name>
    <name type="synonym">yxkG</name>
    <name type="ordered locus">BSU38810</name>
</gene>
<comment type="function">
    <text evidence="2 3 4 5 6 7">Required to energize different ABC-type saccharide transporters (PubMed:20693325, PubMed:29240795). Part of the MdxEFG-MsmX ABC transporter complex involved in maltodextrin import, of the AraNPQ-MsmX complex involved in arabinooligosaccharides import, of the GanPQS-MsmX complex involved in galactooligosaccharides import, and of the MelEDC-MsmX complex involved in melibiose, raffinose and stachyose import (PubMed:16707683, PubMed:20693325, PubMed:27501980, PubMed:29240795, PubMed:31138628). Is probably also part of the ABC transporter complex YtcQP-YteP-MsmX involved in polygalacturonan and rhamnogalacturonan type I import during pectin degradation (PubMed:29240795). Responsible for energy coupling to the transport system (Probable).</text>
</comment>
<comment type="subunit">
    <text evidence="2 3 4 5 6">The complex involved in maltodextrin import is composed of two ATP-binding proteins (MsmX), two transmembrane proteins (MdxF and MdxG) and a solute-binding protein (MdxE) (PubMed:16707683). The complex involved in arabinooligosaccharides uptake is composed of two ATP-binding proteins (MsmX), two transmembrane proteins (AraP and AraQ) and a solute-binding protein (AraN) (PubMed:20693325). The complex involved in galactooligosaccharides uptake is composed of two ATP-binding proteins (MsmX), two transmembrane proteins (GanP and GanQ) and a solute-binding protein (GanS) (PubMed:27501980, PubMed:29240795). The complex involved in melibiose, raffinose and stachyose import is composed of two ATP-binding proteins (MsmX), two transmembrane proteins (MelC and MelD) and a solute-binding protein (MelE) (PubMed:31138628). The complex involved in polygalacturonan and rhamnogalacturonan type I uptake is probably composed of two ATP-binding proteins (MsmX), two transmembrane proteins (YtcP and YteP) and a solute-binding protein (YtcQ) (PubMed:29240795).</text>
</comment>
<comment type="subcellular location">
    <subcellularLocation>
        <location evidence="7">Cell membrane</location>
        <topology evidence="7">Peripheral membrane protein</topology>
    </subcellularLocation>
</comment>
<comment type="induction">
    <text evidence="5">Expressed in the presence of either arabinose or arabinotriose. Repressed by glucose.</text>
</comment>
<comment type="disruption phenotype">
    <text evidence="3 5 6">Deletion of the gene abolishes induction of the melREDCA operon the presence of melibiose and raffinose (PubMed:31138628). It does not affect growth in the presence of glucose and arabinose, but it has a negative effect on the ability of the mutant to grow on the alpha-1,5-arabinose oligomers alpha-1,5-arabinobiose, alpha-1,5-arabinotriose and alpha-1,5-arabinotetraose (PubMed:20693325). Deletion mutant cannot utilize pectin and galactan, and shows a slower but steady growth rate in the presence of type I rhamnogalacturonan or polygalacturonan (PubMed:29240795).</text>
</comment>
<comment type="similarity">
    <text evidence="7">Belongs to the ABC transporter superfamily.</text>
</comment>
<proteinExistence type="evidence at protein level"/>
<evidence type="ECO:0000255" key="1">
    <source>
        <dbReference type="PROSITE-ProRule" id="PRU00434"/>
    </source>
</evidence>
<evidence type="ECO:0000269" key="2">
    <source>
    </source>
</evidence>
<evidence type="ECO:0000269" key="3">
    <source>
    </source>
</evidence>
<evidence type="ECO:0000269" key="4">
    <source>
    </source>
</evidence>
<evidence type="ECO:0000269" key="5">
    <source>
    </source>
</evidence>
<evidence type="ECO:0000269" key="6">
    <source>
    </source>
</evidence>
<evidence type="ECO:0000305" key="7"/>
<evidence type="ECO:0000305" key="8">
    <source>
    </source>
</evidence>
<evidence type="ECO:0000305" key="9">
    <source>
    </source>
</evidence>
<evidence type="ECO:0000305" key="10">
    <source>
    </source>
</evidence>
<evidence type="ECO:0000305" key="11">
    <source>
    </source>
</evidence>
<evidence type="ECO:0000305" key="12">
    <source>
    </source>
</evidence>
<evidence type="ECO:0007829" key="13">
    <source>
        <dbReference type="PDB" id="6YIR"/>
    </source>
</evidence>
<organism>
    <name type="scientific">Bacillus subtilis (strain 168)</name>
    <dbReference type="NCBI Taxonomy" id="224308"/>
    <lineage>
        <taxon>Bacteria</taxon>
        <taxon>Bacillati</taxon>
        <taxon>Bacillota</taxon>
        <taxon>Bacilli</taxon>
        <taxon>Bacillales</taxon>
        <taxon>Bacillaceae</taxon>
        <taxon>Bacillus</taxon>
    </lineage>
</organism>